<feature type="chain" id="PRO_0000261733" description="Large ribosomal subunit protein uL13">
    <location>
        <begin position="1"/>
        <end position="142"/>
    </location>
</feature>
<accession>Q0I2N3</accession>
<sequence>MKTFVAKPETVKRDWYVVDATGKTLGRLATELARRLRGKHKAEYTPHVDTGDYIVVINAEKVAVTGNKETDKLYYWHTGYVGGIKQATFKEMIARRPEAVIEIAVKGMLPKGPLGRAMFRKLKVYAGSEHNHAAQQPQVLDI</sequence>
<evidence type="ECO:0000255" key="1">
    <source>
        <dbReference type="HAMAP-Rule" id="MF_01366"/>
    </source>
</evidence>
<evidence type="ECO:0000305" key="2"/>
<gene>
    <name evidence="1" type="primary">rplM</name>
    <name type="ordered locus">HS_0752</name>
</gene>
<proteinExistence type="inferred from homology"/>
<name>RL13_HISS1</name>
<organism>
    <name type="scientific">Histophilus somni (strain 129Pt)</name>
    <name type="common">Haemophilus somnus</name>
    <dbReference type="NCBI Taxonomy" id="205914"/>
    <lineage>
        <taxon>Bacteria</taxon>
        <taxon>Pseudomonadati</taxon>
        <taxon>Pseudomonadota</taxon>
        <taxon>Gammaproteobacteria</taxon>
        <taxon>Pasteurellales</taxon>
        <taxon>Pasteurellaceae</taxon>
        <taxon>Histophilus</taxon>
    </lineage>
</organism>
<protein>
    <recommendedName>
        <fullName evidence="1">Large ribosomal subunit protein uL13</fullName>
    </recommendedName>
    <alternativeName>
        <fullName evidence="2">50S ribosomal protein L13</fullName>
    </alternativeName>
</protein>
<dbReference type="EMBL" id="CP000436">
    <property type="protein sequence ID" value="ABI25027.1"/>
    <property type="molecule type" value="Genomic_DNA"/>
</dbReference>
<dbReference type="SMR" id="Q0I2N3"/>
<dbReference type="KEGG" id="hso:HS_0752"/>
<dbReference type="eggNOG" id="COG0102">
    <property type="taxonomic scope" value="Bacteria"/>
</dbReference>
<dbReference type="HOGENOM" id="CLU_082184_2_2_6"/>
<dbReference type="GO" id="GO:0022625">
    <property type="term" value="C:cytosolic large ribosomal subunit"/>
    <property type="evidence" value="ECO:0007669"/>
    <property type="project" value="TreeGrafter"/>
</dbReference>
<dbReference type="GO" id="GO:0003729">
    <property type="term" value="F:mRNA binding"/>
    <property type="evidence" value="ECO:0007669"/>
    <property type="project" value="TreeGrafter"/>
</dbReference>
<dbReference type="GO" id="GO:0003735">
    <property type="term" value="F:structural constituent of ribosome"/>
    <property type="evidence" value="ECO:0007669"/>
    <property type="project" value="InterPro"/>
</dbReference>
<dbReference type="GO" id="GO:0017148">
    <property type="term" value="P:negative regulation of translation"/>
    <property type="evidence" value="ECO:0007669"/>
    <property type="project" value="TreeGrafter"/>
</dbReference>
<dbReference type="GO" id="GO:0006412">
    <property type="term" value="P:translation"/>
    <property type="evidence" value="ECO:0007669"/>
    <property type="project" value="UniProtKB-UniRule"/>
</dbReference>
<dbReference type="CDD" id="cd00392">
    <property type="entry name" value="Ribosomal_L13"/>
    <property type="match status" value="1"/>
</dbReference>
<dbReference type="FunFam" id="3.90.1180.10:FF:000001">
    <property type="entry name" value="50S ribosomal protein L13"/>
    <property type="match status" value="1"/>
</dbReference>
<dbReference type="Gene3D" id="3.90.1180.10">
    <property type="entry name" value="Ribosomal protein L13"/>
    <property type="match status" value="1"/>
</dbReference>
<dbReference type="HAMAP" id="MF_01366">
    <property type="entry name" value="Ribosomal_uL13"/>
    <property type="match status" value="1"/>
</dbReference>
<dbReference type="InterPro" id="IPR005822">
    <property type="entry name" value="Ribosomal_uL13"/>
</dbReference>
<dbReference type="InterPro" id="IPR005823">
    <property type="entry name" value="Ribosomal_uL13_bac-type"/>
</dbReference>
<dbReference type="InterPro" id="IPR023563">
    <property type="entry name" value="Ribosomal_uL13_CS"/>
</dbReference>
<dbReference type="InterPro" id="IPR036899">
    <property type="entry name" value="Ribosomal_uL13_sf"/>
</dbReference>
<dbReference type="NCBIfam" id="TIGR01066">
    <property type="entry name" value="rplM_bact"/>
    <property type="match status" value="1"/>
</dbReference>
<dbReference type="PANTHER" id="PTHR11545:SF2">
    <property type="entry name" value="LARGE RIBOSOMAL SUBUNIT PROTEIN UL13M"/>
    <property type="match status" value="1"/>
</dbReference>
<dbReference type="PANTHER" id="PTHR11545">
    <property type="entry name" value="RIBOSOMAL PROTEIN L13"/>
    <property type="match status" value="1"/>
</dbReference>
<dbReference type="Pfam" id="PF00572">
    <property type="entry name" value="Ribosomal_L13"/>
    <property type="match status" value="1"/>
</dbReference>
<dbReference type="PIRSF" id="PIRSF002181">
    <property type="entry name" value="Ribosomal_L13"/>
    <property type="match status" value="1"/>
</dbReference>
<dbReference type="SUPFAM" id="SSF52161">
    <property type="entry name" value="Ribosomal protein L13"/>
    <property type="match status" value="1"/>
</dbReference>
<dbReference type="PROSITE" id="PS00783">
    <property type="entry name" value="RIBOSOMAL_L13"/>
    <property type="match status" value="1"/>
</dbReference>
<comment type="function">
    <text evidence="1">This protein is one of the early assembly proteins of the 50S ribosomal subunit, although it is not seen to bind rRNA by itself. It is important during the early stages of 50S assembly.</text>
</comment>
<comment type="subunit">
    <text evidence="1">Part of the 50S ribosomal subunit.</text>
</comment>
<comment type="similarity">
    <text evidence="1">Belongs to the universal ribosomal protein uL13 family.</text>
</comment>
<keyword id="KW-0687">Ribonucleoprotein</keyword>
<keyword id="KW-0689">Ribosomal protein</keyword>
<reference key="1">
    <citation type="journal article" date="2007" name="J. Bacteriol.">
        <title>Complete genome sequence of Haemophilus somnus (Histophilus somni) strain 129Pt and comparison to Haemophilus ducreyi 35000HP and Haemophilus influenzae Rd.</title>
        <authorList>
            <person name="Challacombe J.F."/>
            <person name="Duncan A.J."/>
            <person name="Brettin T.S."/>
            <person name="Bruce D."/>
            <person name="Chertkov O."/>
            <person name="Detter J.C."/>
            <person name="Han C.S."/>
            <person name="Misra M."/>
            <person name="Richardson P."/>
            <person name="Tapia R."/>
            <person name="Thayer N."/>
            <person name="Xie G."/>
            <person name="Inzana T.J."/>
        </authorList>
    </citation>
    <scope>NUCLEOTIDE SEQUENCE [LARGE SCALE GENOMIC DNA]</scope>
    <source>
        <strain>129Pt</strain>
    </source>
</reference>